<name>RL15_SACD2</name>
<keyword id="KW-1185">Reference proteome</keyword>
<keyword id="KW-0687">Ribonucleoprotein</keyword>
<keyword id="KW-0689">Ribosomal protein</keyword>
<keyword id="KW-0694">RNA-binding</keyword>
<keyword id="KW-0699">rRNA-binding</keyword>
<protein>
    <recommendedName>
        <fullName evidence="1">Large ribosomal subunit protein uL15</fullName>
    </recommendedName>
    <alternativeName>
        <fullName evidence="3">50S ribosomal protein L15</fullName>
    </alternativeName>
</protein>
<evidence type="ECO:0000255" key="1">
    <source>
        <dbReference type="HAMAP-Rule" id="MF_01341"/>
    </source>
</evidence>
<evidence type="ECO:0000256" key="2">
    <source>
        <dbReference type="SAM" id="MobiDB-lite"/>
    </source>
</evidence>
<evidence type="ECO:0000305" key="3"/>
<dbReference type="EMBL" id="CP000282">
    <property type="protein sequence ID" value="ABD80240.1"/>
    <property type="molecule type" value="Genomic_DNA"/>
</dbReference>
<dbReference type="RefSeq" id="WP_011467460.1">
    <property type="nucleotide sequence ID" value="NC_007912.1"/>
</dbReference>
<dbReference type="SMR" id="Q21M39"/>
<dbReference type="STRING" id="203122.Sde_0978"/>
<dbReference type="GeneID" id="98612663"/>
<dbReference type="KEGG" id="sde:Sde_0978"/>
<dbReference type="eggNOG" id="COG0200">
    <property type="taxonomic scope" value="Bacteria"/>
</dbReference>
<dbReference type="HOGENOM" id="CLU_055188_4_2_6"/>
<dbReference type="OrthoDB" id="9810293at2"/>
<dbReference type="Proteomes" id="UP000001947">
    <property type="component" value="Chromosome"/>
</dbReference>
<dbReference type="GO" id="GO:0022625">
    <property type="term" value="C:cytosolic large ribosomal subunit"/>
    <property type="evidence" value="ECO:0007669"/>
    <property type="project" value="TreeGrafter"/>
</dbReference>
<dbReference type="GO" id="GO:0019843">
    <property type="term" value="F:rRNA binding"/>
    <property type="evidence" value="ECO:0007669"/>
    <property type="project" value="UniProtKB-UniRule"/>
</dbReference>
<dbReference type="GO" id="GO:0003735">
    <property type="term" value="F:structural constituent of ribosome"/>
    <property type="evidence" value="ECO:0007669"/>
    <property type="project" value="InterPro"/>
</dbReference>
<dbReference type="GO" id="GO:0006412">
    <property type="term" value="P:translation"/>
    <property type="evidence" value="ECO:0007669"/>
    <property type="project" value="UniProtKB-UniRule"/>
</dbReference>
<dbReference type="Gene3D" id="3.100.10.10">
    <property type="match status" value="1"/>
</dbReference>
<dbReference type="HAMAP" id="MF_01341">
    <property type="entry name" value="Ribosomal_uL15"/>
    <property type="match status" value="1"/>
</dbReference>
<dbReference type="InterPro" id="IPR030878">
    <property type="entry name" value="Ribosomal_uL15"/>
</dbReference>
<dbReference type="InterPro" id="IPR021131">
    <property type="entry name" value="Ribosomal_uL15/eL18"/>
</dbReference>
<dbReference type="InterPro" id="IPR036227">
    <property type="entry name" value="Ribosomal_uL15/eL18_sf"/>
</dbReference>
<dbReference type="InterPro" id="IPR005749">
    <property type="entry name" value="Ribosomal_uL15_bac-type"/>
</dbReference>
<dbReference type="NCBIfam" id="TIGR01071">
    <property type="entry name" value="rplO_bact"/>
    <property type="match status" value="1"/>
</dbReference>
<dbReference type="PANTHER" id="PTHR12934">
    <property type="entry name" value="50S RIBOSOMAL PROTEIN L15"/>
    <property type="match status" value="1"/>
</dbReference>
<dbReference type="PANTHER" id="PTHR12934:SF11">
    <property type="entry name" value="LARGE RIBOSOMAL SUBUNIT PROTEIN UL15M"/>
    <property type="match status" value="1"/>
</dbReference>
<dbReference type="Pfam" id="PF00828">
    <property type="entry name" value="Ribosomal_L27A"/>
    <property type="match status" value="1"/>
</dbReference>
<dbReference type="SUPFAM" id="SSF52080">
    <property type="entry name" value="Ribosomal proteins L15p and L18e"/>
    <property type="match status" value="1"/>
</dbReference>
<comment type="function">
    <text evidence="1">Binds to the 23S rRNA.</text>
</comment>
<comment type="subunit">
    <text evidence="1">Part of the 50S ribosomal subunit.</text>
</comment>
<comment type="similarity">
    <text evidence="1">Belongs to the universal ribosomal protein uL15 family.</text>
</comment>
<organism>
    <name type="scientific">Saccharophagus degradans (strain 2-40 / ATCC 43961 / DSM 17024)</name>
    <dbReference type="NCBI Taxonomy" id="203122"/>
    <lineage>
        <taxon>Bacteria</taxon>
        <taxon>Pseudomonadati</taxon>
        <taxon>Pseudomonadota</taxon>
        <taxon>Gammaproteobacteria</taxon>
        <taxon>Cellvibrionales</taxon>
        <taxon>Cellvibrionaceae</taxon>
        <taxon>Saccharophagus</taxon>
    </lineage>
</organism>
<sequence length="144" mass="15148">MRLNTLSPAPGRVSAKKRVGRGIGSGLGKTAGRGHKGLKSRSGGSVKPGFEGGQMPLQKRLPKFGFTSRISRVTAEVRLAELNKVEADIIDIEALRAADLIDNNIKRAKVFLSGELTKAVTIKGLMVTKGAKAAIEAAGGKIEE</sequence>
<reference key="1">
    <citation type="journal article" date="2008" name="PLoS Genet.">
        <title>Complete genome sequence of the complex carbohydrate-degrading marine bacterium, Saccharophagus degradans strain 2-40 T.</title>
        <authorList>
            <person name="Weiner R.M."/>
            <person name="Taylor L.E. II"/>
            <person name="Henrissat B."/>
            <person name="Hauser L."/>
            <person name="Land M."/>
            <person name="Coutinho P.M."/>
            <person name="Rancurel C."/>
            <person name="Saunders E.H."/>
            <person name="Longmire A.G."/>
            <person name="Zhang H."/>
            <person name="Bayer E.A."/>
            <person name="Gilbert H.J."/>
            <person name="Larimer F."/>
            <person name="Zhulin I.B."/>
            <person name="Ekborg N.A."/>
            <person name="Lamed R."/>
            <person name="Richardson P.M."/>
            <person name="Borovok I."/>
            <person name="Hutcheson S."/>
        </authorList>
    </citation>
    <scope>NUCLEOTIDE SEQUENCE [LARGE SCALE GENOMIC DNA]</scope>
    <source>
        <strain>2-40 / ATCC 43961 / DSM 17024</strain>
    </source>
</reference>
<proteinExistence type="inferred from homology"/>
<feature type="chain" id="PRO_0000251558" description="Large ribosomal subunit protein uL15">
    <location>
        <begin position="1"/>
        <end position="144"/>
    </location>
</feature>
<feature type="region of interest" description="Disordered" evidence="2">
    <location>
        <begin position="1"/>
        <end position="54"/>
    </location>
</feature>
<feature type="compositionally biased region" description="Gly residues" evidence="2">
    <location>
        <begin position="21"/>
        <end position="31"/>
    </location>
</feature>
<gene>
    <name evidence="1" type="primary">rplO</name>
    <name type="ordered locus">Sde_0978</name>
</gene>
<accession>Q21M39</accession>